<feature type="chain" id="PRO_1000149765" description="Macrodomain Ter protein">
    <location>
        <begin position="1"/>
        <end position="150"/>
    </location>
</feature>
<dbReference type="EMBL" id="CP000857">
    <property type="protein sequence ID" value="ACN46781.1"/>
    <property type="molecule type" value="Genomic_DNA"/>
</dbReference>
<dbReference type="RefSeq" id="WP_000877172.1">
    <property type="nucleotide sequence ID" value="NC_012125.1"/>
</dbReference>
<dbReference type="SMR" id="C0Q8D6"/>
<dbReference type="KEGG" id="sei:SPC_2680"/>
<dbReference type="HOGENOM" id="CLU_142157_0_0_6"/>
<dbReference type="Proteomes" id="UP000001599">
    <property type="component" value="Chromosome"/>
</dbReference>
<dbReference type="GO" id="GO:0005737">
    <property type="term" value="C:cytoplasm"/>
    <property type="evidence" value="ECO:0007669"/>
    <property type="project" value="UniProtKB-SubCell"/>
</dbReference>
<dbReference type="GO" id="GO:0043565">
    <property type="term" value="F:sequence-specific DNA binding"/>
    <property type="evidence" value="ECO:0007669"/>
    <property type="project" value="UniProtKB-UniRule"/>
</dbReference>
<dbReference type="GO" id="GO:0051301">
    <property type="term" value="P:cell division"/>
    <property type="evidence" value="ECO:0007669"/>
    <property type="project" value="UniProtKB-UniRule"/>
</dbReference>
<dbReference type="GO" id="GO:0006355">
    <property type="term" value="P:regulation of DNA-templated transcription"/>
    <property type="evidence" value="ECO:0007669"/>
    <property type="project" value="InterPro"/>
</dbReference>
<dbReference type="Gene3D" id="1.20.1270.380">
    <property type="entry name" value="MatP, N-terminal domain"/>
    <property type="match status" value="1"/>
</dbReference>
<dbReference type="Gene3D" id="1.10.1220.10">
    <property type="entry name" value="Met repressor-like"/>
    <property type="match status" value="1"/>
</dbReference>
<dbReference type="HAMAP" id="MF_01073">
    <property type="entry name" value="MatP"/>
    <property type="match status" value="1"/>
</dbReference>
<dbReference type="InterPro" id="IPR013321">
    <property type="entry name" value="Arc_rbn_hlx_hlx"/>
</dbReference>
<dbReference type="InterPro" id="IPR009390">
    <property type="entry name" value="MatP"/>
</dbReference>
<dbReference type="InterPro" id="IPR035375">
    <property type="entry name" value="MatP_C"/>
</dbReference>
<dbReference type="InterPro" id="IPR035087">
    <property type="entry name" value="MatP_N"/>
</dbReference>
<dbReference type="InterPro" id="IPR038339">
    <property type="entry name" value="MatP_N_sf"/>
</dbReference>
<dbReference type="NCBIfam" id="NF003471">
    <property type="entry name" value="PRK05097.1"/>
    <property type="match status" value="1"/>
</dbReference>
<dbReference type="Pfam" id="PF06303">
    <property type="entry name" value="MatP"/>
    <property type="match status" value="1"/>
</dbReference>
<dbReference type="Pfam" id="PF17414">
    <property type="entry name" value="MatP_C"/>
    <property type="match status" value="1"/>
</dbReference>
<gene>
    <name evidence="1" type="primary">matP</name>
    <name type="ordered locus">SPC_2680</name>
</gene>
<keyword id="KW-0131">Cell cycle</keyword>
<keyword id="KW-0132">Cell division</keyword>
<keyword id="KW-0963">Cytoplasm</keyword>
<keyword id="KW-0238">DNA-binding</keyword>
<proteinExistence type="inferred from homology"/>
<accession>C0Q8D6</accession>
<organism>
    <name type="scientific">Salmonella paratyphi C (strain RKS4594)</name>
    <dbReference type="NCBI Taxonomy" id="476213"/>
    <lineage>
        <taxon>Bacteria</taxon>
        <taxon>Pseudomonadati</taxon>
        <taxon>Pseudomonadota</taxon>
        <taxon>Gammaproteobacteria</taxon>
        <taxon>Enterobacterales</taxon>
        <taxon>Enterobacteriaceae</taxon>
        <taxon>Salmonella</taxon>
    </lineage>
</organism>
<protein>
    <recommendedName>
        <fullName evidence="1">Macrodomain Ter protein</fullName>
    </recommendedName>
</protein>
<reference key="1">
    <citation type="journal article" date="2009" name="PLoS ONE">
        <title>Salmonella paratyphi C: genetic divergence from Salmonella choleraesuis and pathogenic convergence with Salmonella typhi.</title>
        <authorList>
            <person name="Liu W.-Q."/>
            <person name="Feng Y."/>
            <person name="Wang Y."/>
            <person name="Zou Q.-H."/>
            <person name="Chen F."/>
            <person name="Guo J.-T."/>
            <person name="Peng Y.-H."/>
            <person name="Jin Y."/>
            <person name="Li Y.-G."/>
            <person name="Hu S.-N."/>
            <person name="Johnston R.N."/>
            <person name="Liu G.-R."/>
            <person name="Liu S.-L."/>
        </authorList>
    </citation>
    <scope>NUCLEOTIDE SEQUENCE [LARGE SCALE GENOMIC DNA]</scope>
    <source>
        <strain>RKS4594</strain>
    </source>
</reference>
<name>MATP_SALPC</name>
<sequence>MKYQQLENLESGWKWKYLVKKHREGELITRYVEASAAQEAVNLLLALENEPVRVNVWIDRHMNPALLNRMKQTIRARRKRHFNAEHQHTRKKSIDLEFMVWQRLAGLAQRRGKTLSETIVQLIEDAEHKEKYATQMTTLKQDLQALLGKK</sequence>
<comment type="function">
    <text evidence="1">Required for spatial organization of the terminus region of the chromosome (Ter macrodomain) during the cell cycle. Prevents early segregation of duplicated Ter macrodomains during cell division. Binds specifically to matS, which is a 13 bp signature motif repeated within the Ter macrodomain.</text>
</comment>
<comment type="subunit">
    <text evidence="1">Homodimer.</text>
</comment>
<comment type="subcellular location">
    <subcellularLocation>
        <location evidence="1">Cytoplasm</location>
    </subcellularLocation>
</comment>
<comment type="similarity">
    <text evidence="1">Belongs to the MatP family.</text>
</comment>
<evidence type="ECO:0000255" key="1">
    <source>
        <dbReference type="HAMAP-Rule" id="MF_01073"/>
    </source>
</evidence>